<feature type="chain" id="PRO_0000048403" description="Tubulin beta-1 chain">
    <location>
        <begin position="1"/>
        <end position="445"/>
    </location>
</feature>
<feature type="region of interest" description="Disordered" evidence="3">
    <location>
        <begin position="422"/>
        <end position="445"/>
    </location>
</feature>
<feature type="compositionally biased region" description="Acidic residues" evidence="3">
    <location>
        <begin position="427"/>
        <end position="445"/>
    </location>
</feature>
<feature type="binding site" evidence="2">
    <location>
        <position position="11"/>
    </location>
    <ligand>
        <name>GTP</name>
        <dbReference type="ChEBI" id="CHEBI:37565"/>
    </ligand>
</feature>
<feature type="binding site" evidence="1">
    <location>
        <position position="69"/>
    </location>
    <ligand>
        <name>GTP</name>
        <dbReference type="ChEBI" id="CHEBI:37565"/>
    </ligand>
</feature>
<feature type="binding site" evidence="1">
    <location>
        <position position="69"/>
    </location>
    <ligand>
        <name>Mg(2+)</name>
        <dbReference type="ChEBI" id="CHEBI:18420"/>
    </ligand>
</feature>
<feature type="binding site" evidence="2">
    <location>
        <position position="138"/>
    </location>
    <ligand>
        <name>GTP</name>
        <dbReference type="ChEBI" id="CHEBI:37565"/>
    </ligand>
</feature>
<feature type="binding site" evidence="2">
    <location>
        <position position="142"/>
    </location>
    <ligand>
        <name>GTP</name>
        <dbReference type="ChEBI" id="CHEBI:37565"/>
    </ligand>
</feature>
<feature type="binding site" evidence="2">
    <location>
        <position position="143"/>
    </location>
    <ligand>
        <name>GTP</name>
        <dbReference type="ChEBI" id="CHEBI:37565"/>
    </ligand>
</feature>
<feature type="binding site" evidence="2">
    <location>
        <position position="144"/>
    </location>
    <ligand>
        <name>GTP</name>
        <dbReference type="ChEBI" id="CHEBI:37565"/>
    </ligand>
</feature>
<feature type="binding site" evidence="2">
    <location>
        <position position="204"/>
    </location>
    <ligand>
        <name>GTP</name>
        <dbReference type="ChEBI" id="CHEBI:37565"/>
    </ligand>
</feature>
<feature type="binding site" evidence="2">
    <location>
        <position position="226"/>
    </location>
    <ligand>
        <name>GTP</name>
        <dbReference type="ChEBI" id="CHEBI:37565"/>
    </ligand>
</feature>
<keyword id="KW-0963">Cytoplasm</keyword>
<keyword id="KW-0206">Cytoskeleton</keyword>
<keyword id="KW-0342">GTP-binding</keyword>
<keyword id="KW-0460">Magnesium</keyword>
<keyword id="KW-0479">Metal-binding</keyword>
<keyword id="KW-0493">Microtubule</keyword>
<keyword id="KW-0547">Nucleotide-binding</keyword>
<proteinExistence type="inferred from homology"/>
<comment type="function">
    <text>Tubulin is the major constituent of microtubules, a cylinder consisting of laterally associated linear protofilaments composed of alpha- and beta-tubulin heterodimers. Microtubules grow by the addition of GTP-tubulin dimers to the microtubule end, where a stabilizing cap forms. Below the cap, tubulin dimers are in GDP-bound state, owing to GTPase activity of alpha-tubulin.</text>
</comment>
<comment type="cofactor">
    <cofactor evidence="1">
        <name>Mg(2+)</name>
        <dbReference type="ChEBI" id="CHEBI:18420"/>
    </cofactor>
</comment>
<comment type="subunit">
    <text>Dimer of alpha and beta chains. A typical microtubule is a hollow water-filled tube with an outer diameter of 25 nm and an inner diameter of 15 nM. Alpha-beta heterodimers associate head-to-tail to form protofilaments running lengthwise along the microtubule wall with the beta-tubulin subunit facing the microtubule plus end conferring a structural polarity. Microtubules usually have 13 protofilaments but different protofilament numbers can be found in some organisms and specialized cells.</text>
</comment>
<comment type="subcellular location">
    <subcellularLocation>
        <location>Cytoplasm</location>
        <location>Cytoskeleton</location>
    </subcellularLocation>
</comment>
<comment type="similarity">
    <text evidence="4">Belongs to the tubulin family.</text>
</comment>
<name>TBB1_COLGR</name>
<dbReference type="EMBL" id="M34491">
    <property type="protein sequence ID" value="AAA33045.1"/>
    <property type="molecule type" value="Genomic_DNA"/>
</dbReference>
<dbReference type="PIR" id="JQ0422">
    <property type="entry name" value="JQ0422"/>
</dbReference>
<dbReference type="SMR" id="P22013"/>
<dbReference type="VEuPathDB" id="FungiDB:GLRG_01057"/>
<dbReference type="OMA" id="YQDAGMD"/>
<dbReference type="GO" id="GO:0005737">
    <property type="term" value="C:cytoplasm"/>
    <property type="evidence" value="ECO:0007669"/>
    <property type="project" value="UniProtKB-KW"/>
</dbReference>
<dbReference type="GO" id="GO:0005874">
    <property type="term" value="C:microtubule"/>
    <property type="evidence" value="ECO:0007669"/>
    <property type="project" value="UniProtKB-KW"/>
</dbReference>
<dbReference type="GO" id="GO:0005525">
    <property type="term" value="F:GTP binding"/>
    <property type="evidence" value="ECO:0007669"/>
    <property type="project" value="UniProtKB-KW"/>
</dbReference>
<dbReference type="GO" id="GO:0003924">
    <property type="term" value="F:GTPase activity"/>
    <property type="evidence" value="ECO:0007669"/>
    <property type="project" value="InterPro"/>
</dbReference>
<dbReference type="GO" id="GO:0046872">
    <property type="term" value="F:metal ion binding"/>
    <property type="evidence" value="ECO:0007669"/>
    <property type="project" value="UniProtKB-KW"/>
</dbReference>
<dbReference type="GO" id="GO:0005200">
    <property type="term" value="F:structural constituent of cytoskeleton"/>
    <property type="evidence" value="ECO:0007669"/>
    <property type="project" value="InterPro"/>
</dbReference>
<dbReference type="GO" id="GO:0007017">
    <property type="term" value="P:microtubule-based process"/>
    <property type="evidence" value="ECO:0007669"/>
    <property type="project" value="InterPro"/>
</dbReference>
<dbReference type="CDD" id="cd02187">
    <property type="entry name" value="beta_tubulin"/>
    <property type="match status" value="1"/>
</dbReference>
<dbReference type="FunFam" id="1.10.287.600:FF:000006">
    <property type="entry name" value="Tubulin beta chain"/>
    <property type="match status" value="1"/>
</dbReference>
<dbReference type="FunFam" id="3.30.1330.20:FF:000009">
    <property type="entry name" value="Tubulin beta chain"/>
    <property type="match status" value="1"/>
</dbReference>
<dbReference type="FunFam" id="3.40.50.1440:FF:000009">
    <property type="entry name" value="Tubulin beta chain"/>
    <property type="match status" value="1"/>
</dbReference>
<dbReference type="Gene3D" id="1.10.287.600">
    <property type="entry name" value="Helix hairpin bin"/>
    <property type="match status" value="1"/>
</dbReference>
<dbReference type="Gene3D" id="3.30.1330.20">
    <property type="entry name" value="Tubulin/FtsZ, C-terminal domain"/>
    <property type="match status" value="1"/>
</dbReference>
<dbReference type="Gene3D" id="3.40.50.1440">
    <property type="entry name" value="Tubulin/FtsZ, GTPase domain"/>
    <property type="match status" value="1"/>
</dbReference>
<dbReference type="InterPro" id="IPR013838">
    <property type="entry name" value="Beta-tubulin_BS"/>
</dbReference>
<dbReference type="InterPro" id="IPR002453">
    <property type="entry name" value="Beta_tubulin"/>
</dbReference>
<dbReference type="InterPro" id="IPR008280">
    <property type="entry name" value="Tub_FtsZ_C"/>
</dbReference>
<dbReference type="InterPro" id="IPR000217">
    <property type="entry name" value="Tubulin"/>
</dbReference>
<dbReference type="InterPro" id="IPR037103">
    <property type="entry name" value="Tubulin/FtsZ-like_C"/>
</dbReference>
<dbReference type="InterPro" id="IPR018316">
    <property type="entry name" value="Tubulin/FtsZ_2-layer-sand-dom"/>
</dbReference>
<dbReference type="InterPro" id="IPR036525">
    <property type="entry name" value="Tubulin/FtsZ_GTPase_sf"/>
</dbReference>
<dbReference type="InterPro" id="IPR023123">
    <property type="entry name" value="Tubulin_C"/>
</dbReference>
<dbReference type="InterPro" id="IPR017975">
    <property type="entry name" value="Tubulin_CS"/>
</dbReference>
<dbReference type="InterPro" id="IPR003008">
    <property type="entry name" value="Tubulin_FtsZ_GTPase"/>
</dbReference>
<dbReference type="PANTHER" id="PTHR11588">
    <property type="entry name" value="TUBULIN"/>
    <property type="match status" value="1"/>
</dbReference>
<dbReference type="Pfam" id="PF00091">
    <property type="entry name" value="Tubulin"/>
    <property type="match status" value="1"/>
</dbReference>
<dbReference type="Pfam" id="PF03953">
    <property type="entry name" value="Tubulin_C"/>
    <property type="match status" value="1"/>
</dbReference>
<dbReference type="PRINTS" id="PR01163">
    <property type="entry name" value="BETATUBULIN"/>
</dbReference>
<dbReference type="PRINTS" id="PR01161">
    <property type="entry name" value="TUBULIN"/>
</dbReference>
<dbReference type="SMART" id="SM00864">
    <property type="entry name" value="Tubulin"/>
    <property type="match status" value="1"/>
</dbReference>
<dbReference type="SMART" id="SM00865">
    <property type="entry name" value="Tubulin_C"/>
    <property type="match status" value="1"/>
</dbReference>
<dbReference type="SUPFAM" id="SSF55307">
    <property type="entry name" value="Tubulin C-terminal domain-like"/>
    <property type="match status" value="1"/>
</dbReference>
<dbReference type="SUPFAM" id="SSF52490">
    <property type="entry name" value="Tubulin nucleotide-binding domain-like"/>
    <property type="match status" value="1"/>
</dbReference>
<dbReference type="PROSITE" id="PS00227">
    <property type="entry name" value="TUBULIN"/>
    <property type="match status" value="1"/>
</dbReference>
<dbReference type="PROSITE" id="PS00228">
    <property type="entry name" value="TUBULIN_B_AUTOREG"/>
    <property type="match status" value="1"/>
</dbReference>
<reference key="1">
    <citation type="journal article" date="1990" name="Gene">
        <title>Characterization of two divergent beta-tubulin genes from Colletotrichum graminicola.</title>
        <authorList>
            <person name="Panaccione D.G."/>
            <person name="Hanau R.M."/>
        </authorList>
    </citation>
    <scope>NUCLEOTIDE SEQUENCE [GENOMIC DNA]</scope>
</reference>
<gene>
    <name type="primary">TUB1</name>
</gene>
<evidence type="ECO:0000250" key="1">
    <source>
        <dbReference type="UniProtKB" id="P68363"/>
    </source>
</evidence>
<evidence type="ECO:0000250" key="2">
    <source>
        <dbReference type="UniProtKB" id="Q13509"/>
    </source>
</evidence>
<evidence type="ECO:0000256" key="3">
    <source>
        <dbReference type="SAM" id="MobiDB-lite"/>
    </source>
</evidence>
<evidence type="ECO:0000305" key="4"/>
<accession>P22013</accession>
<protein>
    <recommendedName>
        <fullName>Tubulin beta-1 chain</fullName>
    </recommendedName>
    <alternativeName>
        <fullName>Beta-1-tubulin</fullName>
    </alternativeName>
</protein>
<organism>
    <name type="scientific">Colletotrichum graminicola</name>
    <name type="common">Maize anthracnose fungus</name>
    <name type="synonym">Glomerella graminicola</name>
    <dbReference type="NCBI Taxonomy" id="31870"/>
    <lineage>
        <taxon>Eukaryota</taxon>
        <taxon>Fungi</taxon>
        <taxon>Dikarya</taxon>
        <taxon>Ascomycota</taxon>
        <taxon>Pezizomycotina</taxon>
        <taxon>Sordariomycetes</taxon>
        <taxon>Hypocreomycetidae</taxon>
        <taxon>Glomerellales</taxon>
        <taxon>Glomerellaceae</taxon>
        <taxon>Colletotrichum</taxon>
        <taxon>Colletotrichum graminicola species complex</taxon>
    </lineage>
</organism>
<sequence>MREIIHLQTGQCGNQVGTAFWQTIHGEHGLDQDGVFRGSDEQQSERLSVYFTEAAKQKYVPRAVLVDLEPATMDAIRSGPLGDFFRPDNMVYGQSGAGNNWAKGHYTEGAELVDQVLDVVRREAEACDSLQGFQITHSLGGGTGSGMGTLLIAKVREEFPDRMMATFSVLPSAKVSEVVVEPYNATLSIHQLVENSDETFCIDNEALYDICRRTLKQAHPSYGHLNHLVSRVMSGLTTGFRFPGQLNADLRKLAVNLVPFPRLHFFTVGFAPLTSSASFSNLGIAELTQQMFDPKNVMLASDFRDGRFLTCSTMFRGKVSMKQVEEQIQAIKNKNSANFVEWIPNNIQTAHCSVPPKGLDVSSTFIGNSTAIQNSFRRVGDQFSLMFRRKAFLHWYTGEGMDEMEFTEAESNMNDLVSEYQQYQDAGMDDEYGEEYEDEAPAEEE</sequence>